<name>HEM3_PHOLL</name>
<evidence type="ECO:0000255" key="1">
    <source>
        <dbReference type="HAMAP-Rule" id="MF_00260"/>
    </source>
</evidence>
<reference key="1">
    <citation type="journal article" date="2003" name="Nat. Biotechnol.">
        <title>The genome sequence of the entomopathogenic bacterium Photorhabdus luminescens.</title>
        <authorList>
            <person name="Duchaud E."/>
            <person name="Rusniok C."/>
            <person name="Frangeul L."/>
            <person name="Buchrieser C."/>
            <person name="Givaudan A."/>
            <person name="Taourit S."/>
            <person name="Bocs S."/>
            <person name="Boursaux-Eude C."/>
            <person name="Chandler M."/>
            <person name="Charles J.-F."/>
            <person name="Dassa E."/>
            <person name="Derose R."/>
            <person name="Derzelle S."/>
            <person name="Freyssinet G."/>
            <person name="Gaudriault S."/>
            <person name="Medigue C."/>
            <person name="Lanois A."/>
            <person name="Powell K."/>
            <person name="Siguier P."/>
            <person name="Vincent R."/>
            <person name="Wingate V."/>
            <person name="Zouine M."/>
            <person name="Glaser P."/>
            <person name="Boemare N."/>
            <person name="Danchin A."/>
            <person name="Kunst F."/>
        </authorList>
    </citation>
    <scope>NUCLEOTIDE SEQUENCE [LARGE SCALE GENOMIC DNA]</scope>
    <source>
        <strain>DSM 15139 / CIP 105565 / TT01</strain>
    </source>
</reference>
<keyword id="KW-0627">Porphyrin biosynthesis</keyword>
<keyword id="KW-1185">Reference proteome</keyword>
<keyword id="KW-0808">Transferase</keyword>
<dbReference type="EC" id="2.5.1.61" evidence="1"/>
<dbReference type="EMBL" id="BX571874">
    <property type="protein sequence ID" value="CAE17016.1"/>
    <property type="molecule type" value="Genomic_DNA"/>
</dbReference>
<dbReference type="RefSeq" id="WP_011148715.1">
    <property type="nucleotide sequence ID" value="NC_005126.1"/>
</dbReference>
<dbReference type="SMR" id="Q7MYN1"/>
<dbReference type="STRING" id="243265.plu4644"/>
<dbReference type="GeneID" id="48850857"/>
<dbReference type="KEGG" id="plu:plu4644"/>
<dbReference type="eggNOG" id="COG0181">
    <property type="taxonomic scope" value="Bacteria"/>
</dbReference>
<dbReference type="HOGENOM" id="CLU_019704_0_2_6"/>
<dbReference type="OrthoDB" id="9810298at2"/>
<dbReference type="UniPathway" id="UPA00251">
    <property type="reaction ID" value="UER00319"/>
</dbReference>
<dbReference type="Proteomes" id="UP000002514">
    <property type="component" value="Chromosome"/>
</dbReference>
<dbReference type="GO" id="GO:0005737">
    <property type="term" value="C:cytoplasm"/>
    <property type="evidence" value="ECO:0007669"/>
    <property type="project" value="TreeGrafter"/>
</dbReference>
<dbReference type="GO" id="GO:0004418">
    <property type="term" value="F:hydroxymethylbilane synthase activity"/>
    <property type="evidence" value="ECO:0007669"/>
    <property type="project" value="UniProtKB-UniRule"/>
</dbReference>
<dbReference type="GO" id="GO:0006782">
    <property type="term" value="P:protoporphyrinogen IX biosynthetic process"/>
    <property type="evidence" value="ECO:0007669"/>
    <property type="project" value="UniProtKB-UniRule"/>
</dbReference>
<dbReference type="CDD" id="cd13646">
    <property type="entry name" value="PBP2_EcHMBS_like"/>
    <property type="match status" value="1"/>
</dbReference>
<dbReference type="FunFam" id="3.30.160.40:FF:000002">
    <property type="entry name" value="Porphobilinogen deaminase"/>
    <property type="match status" value="1"/>
</dbReference>
<dbReference type="FunFam" id="3.40.190.10:FF:000004">
    <property type="entry name" value="Porphobilinogen deaminase"/>
    <property type="match status" value="1"/>
</dbReference>
<dbReference type="FunFam" id="3.40.190.10:FF:000005">
    <property type="entry name" value="Porphobilinogen deaminase"/>
    <property type="match status" value="1"/>
</dbReference>
<dbReference type="Gene3D" id="3.40.190.10">
    <property type="entry name" value="Periplasmic binding protein-like II"/>
    <property type="match status" value="2"/>
</dbReference>
<dbReference type="Gene3D" id="3.30.160.40">
    <property type="entry name" value="Porphobilinogen deaminase, C-terminal domain"/>
    <property type="match status" value="1"/>
</dbReference>
<dbReference type="HAMAP" id="MF_00260">
    <property type="entry name" value="Porphobil_deam"/>
    <property type="match status" value="1"/>
</dbReference>
<dbReference type="InterPro" id="IPR000860">
    <property type="entry name" value="HemC"/>
</dbReference>
<dbReference type="InterPro" id="IPR022419">
    <property type="entry name" value="Porphobilin_deaminase_cofac_BS"/>
</dbReference>
<dbReference type="InterPro" id="IPR022417">
    <property type="entry name" value="Porphobilin_deaminase_N"/>
</dbReference>
<dbReference type="InterPro" id="IPR022418">
    <property type="entry name" value="Porphobilinogen_deaminase_C"/>
</dbReference>
<dbReference type="InterPro" id="IPR036803">
    <property type="entry name" value="Porphobilinogen_deaminase_C_sf"/>
</dbReference>
<dbReference type="NCBIfam" id="TIGR00212">
    <property type="entry name" value="hemC"/>
    <property type="match status" value="1"/>
</dbReference>
<dbReference type="PANTHER" id="PTHR11557">
    <property type="entry name" value="PORPHOBILINOGEN DEAMINASE"/>
    <property type="match status" value="1"/>
</dbReference>
<dbReference type="PANTHER" id="PTHR11557:SF0">
    <property type="entry name" value="PORPHOBILINOGEN DEAMINASE"/>
    <property type="match status" value="1"/>
</dbReference>
<dbReference type="Pfam" id="PF01379">
    <property type="entry name" value="Porphobil_deam"/>
    <property type="match status" value="1"/>
</dbReference>
<dbReference type="Pfam" id="PF03900">
    <property type="entry name" value="Porphobil_deamC"/>
    <property type="match status" value="1"/>
</dbReference>
<dbReference type="PIRSF" id="PIRSF001438">
    <property type="entry name" value="4pyrrol_synth_OHMeBilane_synth"/>
    <property type="match status" value="1"/>
</dbReference>
<dbReference type="PRINTS" id="PR00151">
    <property type="entry name" value="PORPHBDMNASE"/>
</dbReference>
<dbReference type="SUPFAM" id="SSF53850">
    <property type="entry name" value="Periplasmic binding protein-like II"/>
    <property type="match status" value="1"/>
</dbReference>
<dbReference type="SUPFAM" id="SSF54782">
    <property type="entry name" value="Porphobilinogen deaminase (hydroxymethylbilane synthase), C-terminal domain"/>
    <property type="match status" value="1"/>
</dbReference>
<dbReference type="PROSITE" id="PS00533">
    <property type="entry name" value="PORPHOBILINOGEN_DEAM"/>
    <property type="match status" value="1"/>
</dbReference>
<feature type="chain" id="PRO_0000142968" description="Porphobilinogen deaminase">
    <location>
        <begin position="1"/>
        <end position="313"/>
    </location>
</feature>
<feature type="modified residue" description="S-(dipyrrolylmethanemethyl)cysteine" evidence="1">
    <location>
        <position position="242"/>
    </location>
</feature>
<accession>Q7MYN1</accession>
<comment type="function">
    <text evidence="1">Tetrapolymerization of the monopyrrole PBG into the hydroxymethylbilane pre-uroporphyrinogen in several discrete steps.</text>
</comment>
<comment type="catalytic activity">
    <reaction evidence="1">
        <text>4 porphobilinogen + H2O = hydroxymethylbilane + 4 NH4(+)</text>
        <dbReference type="Rhea" id="RHEA:13185"/>
        <dbReference type="ChEBI" id="CHEBI:15377"/>
        <dbReference type="ChEBI" id="CHEBI:28938"/>
        <dbReference type="ChEBI" id="CHEBI:57845"/>
        <dbReference type="ChEBI" id="CHEBI:58126"/>
        <dbReference type="EC" id="2.5.1.61"/>
    </reaction>
</comment>
<comment type="cofactor">
    <cofactor evidence="1">
        <name>dipyrromethane</name>
        <dbReference type="ChEBI" id="CHEBI:60342"/>
    </cofactor>
    <text evidence="1">Binds 1 dipyrromethane group covalently.</text>
</comment>
<comment type="pathway">
    <text evidence="1">Porphyrin-containing compound metabolism; protoporphyrin-IX biosynthesis; coproporphyrinogen-III from 5-aminolevulinate: step 2/4.</text>
</comment>
<comment type="subunit">
    <text evidence="1">Monomer.</text>
</comment>
<comment type="miscellaneous">
    <text evidence="1">The porphobilinogen subunits are added to the dipyrromethane group.</text>
</comment>
<comment type="similarity">
    <text evidence="1">Belongs to the HMBS family.</text>
</comment>
<sequence length="313" mass="34421">MSTKTIRIATRQSPLAMWQALYVQQKLQQCHPDLEVQLVPMVTQGDVILDTPLAKIGGKGLFVKELELALLEGRADIAVHSMKDVPISFPEGLGLVTICERDDPRDAFVSVKYHSLDELPTGSIVGTSSLRRQCQLRELRPDLIVRDLRGNVGTRLNKLDNGHYDAIILAVAGLKRLKLHERIRTPLTAEQSLPAVGQGAVGIECRLDDQQTQTLLAPLNHYDTEVCVLAERAMNTRLEGGCQVPIGSYAIWQDGKIWLRALVGAPDGSVIIRGERTALPKDACQAGVELAEELLERGAREILTQVYRGNPST</sequence>
<protein>
    <recommendedName>
        <fullName evidence="1">Porphobilinogen deaminase</fullName>
        <shortName evidence="1">PBG</shortName>
        <ecNumber evidence="1">2.5.1.61</ecNumber>
    </recommendedName>
    <alternativeName>
        <fullName evidence="1">Hydroxymethylbilane synthase</fullName>
        <shortName evidence="1">HMBS</shortName>
    </alternativeName>
    <alternativeName>
        <fullName evidence="1">Pre-uroporphyrinogen synthase</fullName>
    </alternativeName>
</protein>
<organism>
    <name type="scientific">Photorhabdus laumondii subsp. laumondii (strain DSM 15139 / CIP 105565 / TT01)</name>
    <name type="common">Photorhabdus luminescens subsp. laumondii</name>
    <dbReference type="NCBI Taxonomy" id="243265"/>
    <lineage>
        <taxon>Bacteria</taxon>
        <taxon>Pseudomonadati</taxon>
        <taxon>Pseudomonadota</taxon>
        <taxon>Gammaproteobacteria</taxon>
        <taxon>Enterobacterales</taxon>
        <taxon>Morganellaceae</taxon>
        <taxon>Photorhabdus</taxon>
    </lineage>
</organism>
<proteinExistence type="inferred from homology"/>
<gene>
    <name evidence="1" type="primary">hemC</name>
    <name type="ordered locus">plu4644</name>
</gene>